<proteinExistence type="evidence at transcript level"/>
<organism>
    <name type="scientific">Xenopus laevis</name>
    <name type="common">African clawed frog</name>
    <dbReference type="NCBI Taxonomy" id="8355"/>
    <lineage>
        <taxon>Eukaryota</taxon>
        <taxon>Metazoa</taxon>
        <taxon>Chordata</taxon>
        <taxon>Craniata</taxon>
        <taxon>Vertebrata</taxon>
        <taxon>Euteleostomi</taxon>
        <taxon>Amphibia</taxon>
        <taxon>Batrachia</taxon>
        <taxon>Anura</taxon>
        <taxon>Pipoidea</taxon>
        <taxon>Pipidae</taxon>
        <taxon>Xenopodinae</taxon>
        <taxon>Xenopus</taxon>
        <taxon>Xenopus</taxon>
    </lineage>
</organism>
<gene>
    <name type="primary">ascl1</name>
    <name type="synonym">ash1</name>
</gene>
<protein>
    <recommendedName>
        <fullName>Achaete-scute homolog 1</fullName>
        <shortName evidence="6">XASH1</shortName>
    </recommendedName>
</protein>
<keyword id="KW-0010">Activator</keyword>
<keyword id="KW-0217">Developmental protein</keyword>
<keyword id="KW-0221">Differentiation</keyword>
<keyword id="KW-0238">DNA-binding</keyword>
<keyword id="KW-0524">Neurogenesis</keyword>
<keyword id="KW-0539">Nucleus</keyword>
<keyword id="KW-1185">Reference proteome</keyword>
<keyword id="KW-0804">Transcription</keyword>
<keyword id="KW-0805">Transcription regulation</keyword>
<accession>Q06234</accession>
<sequence length="199" mass="22374">MDNCVAAKIMDSNLSSQQQHFLQPHCFFPQNVQQLSPAEEQQASKAKPIKRQRSASPELMRCKRRLNFNGFGYSLPQQQPAAVARRNERERNRVKLVNLGFATLREHVPNGAANKKMSKVETLRSAVEYIRALQQLLDEHDAVSAAFQSGVLSPTISPNYSHDMNSMAGSPVSSYSSDEGSYDPLSPEEQELLDFTTWF</sequence>
<comment type="function">
    <text evidence="2 5">Transcription factor that plays a key role in neuronal differentiation: acts as a pioneer transcription factor, accessing closed chromatin to allow other factors to bind and activate neural pathways (By similarity). Directly binds the E box motif (5'-CANNTG-3') on promoters and promotes transcription of neuronal genes (PubMed:8443105). The combination of three transcription factors, ASCL1, POU3F2/BRN2 and MYT1L, is sufficient to reprogram fibroblasts and other somatic cells into induced neuronal (iN) cells in vitro (By similarity).</text>
</comment>
<comment type="subunit">
    <text evidence="1">Efficient DNA binding requires dimerization with another bHLH protein.</text>
</comment>
<comment type="subcellular location">
    <subcellularLocation>
        <location evidence="2">Nucleus</location>
    </subcellularLocation>
</comment>
<comment type="tissue specificity">
    <text evidence="5">Neuronal precursor cells.</text>
</comment>
<comment type="developmental stage">
    <text evidence="5">Expressed in the embryonic anterior central nervous system. In the forebrain, and then in the eye and hindbrain.</text>
</comment>
<evidence type="ECO:0000250" key="1">
    <source>
        <dbReference type="UniProtKB" id="P50553"/>
    </source>
</evidence>
<evidence type="ECO:0000250" key="2">
    <source>
        <dbReference type="UniProtKB" id="Q02067"/>
    </source>
</evidence>
<evidence type="ECO:0000255" key="3">
    <source>
        <dbReference type="PROSITE-ProRule" id="PRU00981"/>
    </source>
</evidence>
<evidence type="ECO:0000256" key="4">
    <source>
        <dbReference type="SAM" id="MobiDB-lite"/>
    </source>
</evidence>
<evidence type="ECO:0000269" key="5">
    <source>
    </source>
</evidence>
<evidence type="ECO:0000303" key="6">
    <source>
    </source>
</evidence>
<dbReference type="EMBL" id="M98272">
    <property type="protein sequence ID" value="AAA49649.1"/>
    <property type="molecule type" value="mRNA"/>
</dbReference>
<dbReference type="PIR" id="A56548">
    <property type="entry name" value="A56548"/>
</dbReference>
<dbReference type="RefSeq" id="NP_001079247.1">
    <property type="nucleotide sequence ID" value="NM_001085778.1"/>
</dbReference>
<dbReference type="SMR" id="Q06234"/>
<dbReference type="GeneID" id="378517"/>
<dbReference type="KEGG" id="xla:378517"/>
<dbReference type="AGR" id="Xenbase:XB-GENE-1032969"/>
<dbReference type="CTD" id="378517"/>
<dbReference type="Xenbase" id="XB-GENE-1032969">
    <property type="gene designation" value="ascl1.L"/>
</dbReference>
<dbReference type="OrthoDB" id="5976910at2759"/>
<dbReference type="Proteomes" id="UP000186698">
    <property type="component" value="Chromosome 3L"/>
</dbReference>
<dbReference type="Bgee" id="378517">
    <property type="expression patterns" value="Expressed in oocyte and 13 other cell types or tissues"/>
</dbReference>
<dbReference type="GO" id="GO:0090575">
    <property type="term" value="C:RNA polymerase II transcription regulator complex"/>
    <property type="evidence" value="ECO:0007669"/>
    <property type="project" value="TreeGrafter"/>
</dbReference>
<dbReference type="GO" id="GO:0003700">
    <property type="term" value="F:DNA-binding transcription factor activity"/>
    <property type="evidence" value="ECO:0000250"/>
    <property type="project" value="UniProtKB"/>
</dbReference>
<dbReference type="GO" id="GO:0000981">
    <property type="term" value="F:DNA-binding transcription factor activity, RNA polymerase II-specific"/>
    <property type="evidence" value="ECO:0007669"/>
    <property type="project" value="TreeGrafter"/>
</dbReference>
<dbReference type="GO" id="GO:0046983">
    <property type="term" value="F:protein dimerization activity"/>
    <property type="evidence" value="ECO:0007669"/>
    <property type="project" value="InterPro"/>
</dbReference>
<dbReference type="GO" id="GO:0000977">
    <property type="term" value="F:RNA polymerase II transcription regulatory region sequence-specific DNA binding"/>
    <property type="evidence" value="ECO:0007669"/>
    <property type="project" value="TreeGrafter"/>
</dbReference>
<dbReference type="GO" id="GO:0007399">
    <property type="term" value="P:nervous system development"/>
    <property type="evidence" value="ECO:0000250"/>
    <property type="project" value="UniProtKB"/>
</dbReference>
<dbReference type="GO" id="GO:0048666">
    <property type="term" value="P:neuron development"/>
    <property type="evidence" value="ECO:0000250"/>
    <property type="project" value="UniProtKB"/>
</dbReference>
<dbReference type="GO" id="GO:0030182">
    <property type="term" value="P:neuron differentiation"/>
    <property type="evidence" value="ECO:0000250"/>
    <property type="project" value="UniProtKB"/>
</dbReference>
<dbReference type="GO" id="GO:0048663">
    <property type="term" value="P:neuron fate commitment"/>
    <property type="evidence" value="ECO:0000250"/>
    <property type="project" value="UniProtKB"/>
</dbReference>
<dbReference type="GO" id="GO:0048665">
    <property type="term" value="P:neuron fate specification"/>
    <property type="evidence" value="ECO:0000250"/>
    <property type="project" value="UniProtKB"/>
</dbReference>
<dbReference type="GO" id="GO:0045666">
    <property type="term" value="P:positive regulation of neuron differentiation"/>
    <property type="evidence" value="ECO:0000250"/>
    <property type="project" value="UniProtKB"/>
</dbReference>
<dbReference type="GO" id="GO:0045944">
    <property type="term" value="P:positive regulation of transcription by RNA polymerase II"/>
    <property type="evidence" value="ECO:0007669"/>
    <property type="project" value="TreeGrafter"/>
</dbReference>
<dbReference type="GO" id="GO:0050767">
    <property type="term" value="P:regulation of neurogenesis"/>
    <property type="evidence" value="ECO:0007669"/>
    <property type="project" value="TreeGrafter"/>
</dbReference>
<dbReference type="GO" id="GO:0006357">
    <property type="term" value="P:regulation of transcription by RNA polymerase II"/>
    <property type="evidence" value="ECO:0000250"/>
    <property type="project" value="UniProtKB"/>
</dbReference>
<dbReference type="GO" id="GO:0007423">
    <property type="term" value="P:sensory organ development"/>
    <property type="evidence" value="ECO:0007669"/>
    <property type="project" value="TreeGrafter"/>
</dbReference>
<dbReference type="GO" id="GO:0060579">
    <property type="term" value="P:ventral spinal cord interneuron fate commitment"/>
    <property type="evidence" value="ECO:0000250"/>
    <property type="project" value="UniProtKB"/>
</dbReference>
<dbReference type="CDD" id="cd19742">
    <property type="entry name" value="bHLH_TS_ASCL1_Mash1"/>
    <property type="match status" value="1"/>
</dbReference>
<dbReference type="FunFam" id="4.10.280.10:FF:000029">
    <property type="entry name" value="Achaete-scute family bHLH transcription factor 1"/>
    <property type="match status" value="1"/>
</dbReference>
<dbReference type="Gene3D" id="4.10.280.10">
    <property type="entry name" value="Helix-loop-helix DNA-binding domain"/>
    <property type="match status" value="1"/>
</dbReference>
<dbReference type="InterPro" id="IPR011598">
    <property type="entry name" value="bHLH_dom"/>
</dbReference>
<dbReference type="InterPro" id="IPR036638">
    <property type="entry name" value="HLH_DNA-bd_sf"/>
</dbReference>
<dbReference type="InterPro" id="IPR015660">
    <property type="entry name" value="MASH1/Ascl1a-like"/>
</dbReference>
<dbReference type="PANTHER" id="PTHR13935:SF153">
    <property type="entry name" value="ACHAETE-SCUTE FAMILY BHLH TRANSCRIPTION FACTOR 1"/>
    <property type="match status" value="1"/>
</dbReference>
<dbReference type="PANTHER" id="PTHR13935">
    <property type="entry name" value="ACHAETE-SCUTE TRANSCRIPTION FACTOR-RELATED"/>
    <property type="match status" value="1"/>
</dbReference>
<dbReference type="Pfam" id="PF00010">
    <property type="entry name" value="HLH"/>
    <property type="match status" value="1"/>
</dbReference>
<dbReference type="SMART" id="SM00353">
    <property type="entry name" value="HLH"/>
    <property type="match status" value="1"/>
</dbReference>
<dbReference type="SUPFAM" id="SSF47459">
    <property type="entry name" value="HLH, helix-loop-helix DNA-binding domain"/>
    <property type="match status" value="1"/>
</dbReference>
<dbReference type="PROSITE" id="PS50888">
    <property type="entry name" value="BHLH"/>
    <property type="match status" value="1"/>
</dbReference>
<feature type="chain" id="PRO_0000127129" description="Achaete-scute homolog 1">
    <location>
        <begin position="1"/>
        <end position="199"/>
    </location>
</feature>
<feature type="domain" description="bHLH" evidence="3">
    <location>
        <begin position="81"/>
        <end position="133"/>
    </location>
</feature>
<feature type="region of interest" description="Disordered" evidence="4">
    <location>
        <begin position="37"/>
        <end position="56"/>
    </location>
</feature>
<feature type="region of interest" description="Disordered" evidence="4">
    <location>
        <begin position="162"/>
        <end position="189"/>
    </location>
</feature>
<feature type="compositionally biased region" description="Polar residues" evidence="4">
    <location>
        <begin position="162"/>
        <end position="179"/>
    </location>
</feature>
<reference key="1">
    <citation type="journal article" date="1993" name="Mech. Dev.">
        <title>XASH1, a Xenopus homolog of achaete-scute: a proneural gene in anterior regions of the vertebrate CNS.</title>
        <authorList>
            <person name="Ferreiro B."/>
            <person name="Skoglund P."/>
            <person name="Bailey A."/>
            <person name="Dorsky R."/>
            <person name="Harris W.A."/>
        </authorList>
    </citation>
    <scope>NUCLEOTIDE SEQUENCE [MRNA]</scope>
    <scope>FUNCTION</scope>
    <scope>TISSUE SPECIFICITY</scope>
    <scope>DEVELOPMENTAL STAGE</scope>
</reference>
<name>ASCL1_XENLA</name>